<protein>
    <recommendedName>
        <fullName evidence="1">Sodium/sialic acid symporter NanT</fullName>
    </recommendedName>
    <alternativeName>
        <fullName evidence="4">N-acetylneuraminate transporter</fullName>
    </alternativeName>
</protein>
<keyword id="KW-0997">Cell inner membrane</keyword>
<keyword id="KW-1003">Cell membrane</keyword>
<keyword id="KW-0406">Ion transport</keyword>
<keyword id="KW-0472">Membrane</keyword>
<keyword id="KW-0479">Metal-binding</keyword>
<keyword id="KW-1185">Reference proteome</keyword>
<keyword id="KW-0915">Sodium</keyword>
<keyword id="KW-0739">Sodium transport</keyword>
<keyword id="KW-0762">Sugar transport</keyword>
<keyword id="KW-0812">Transmembrane</keyword>
<keyword id="KW-1133">Transmembrane helix</keyword>
<keyword id="KW-0813">Transport</keyword>
<gene>
    <name evidence="6" type="primary">nanT</name>
    <name evidence="6" type="ordered locus">VF_0668</name>
</gene>
<sequence>MEAQSFGTLNYIALFAYLGAIMAVGVYFARRQKSADDYFKAGGRIPGWAAGFSVFATTLSSITFMSIPAKAYTSDWTFLIGQYVAIAILPIVFWFYIPFFRKLNLTSVYEYLERRFDVRMRLFGSISFMLFHIGRIAIVTYLTALALMPFIDISPLMIVFLIGVLCIIYTFLGGIEGVIWTDVIQGVMLSVAAILIFVVICFNVDGGIVEVFSMSNQADKYFPAEQFSWSWTDSTIPVLMIGFFFASLQQFTASQDVVQRYIVTDNIDETKKALITNAKLVACVPIFFFAVGSALFAYYTQNPELLPENFNTGGILPFYVISQMPVGVAGLIIAAIFAASQSSISSSLNSIAACFTSDIYEKVSKNPTSEQKLRIGRTLTVVAGLLGVVASTYLIMSNESEIWDAFNSLLGLMGGPMTGLFMLGIFVRRANANSALLGVVASIATVLWVRSATDLNFFFYGVIGTLMVVIVGYLTAPMFKNNLNSDEIDELSATKEKRSTTAEKA</sequence>
<comment type="function">
    <text evidence="1 3">Symporter that uses the Na(+) gradient as the driving force for the uptake of the sialic acid N-acetylneuraminic acid (Neu5Ac) (By similarity). Might play a role in persistence after colonization (PubMed:28446608).</text>
</comment>
<comment type="catalytic activity">
    <reaction evidence="1">
        <text>N-acetyl-alpha-neuraminate(out) + 2 Na(+)(out) = N-acetyl-alpha-neuraminate(in) + 2 Na(+)(in)</text>
        <dbReference type="Rhea" id="RHEA:78535"/>
        <dbReference type="ChEBI" id="CHEBI:29101"/>
        <dbReference type="ChEBI" id="CHEBI:58770"/>
    </reaction>
</comment>
<comment type="subcellular location">
    <subcellularLocation>
        <location evidence="1">Cell inner membrane</location>
        <topology evidence="2">Multi-pass membrane protein</topology>
    </subcellularLocation>
</comment>
<comment type="disruption phenotype">
    <text evidence="3">Deletion mutant cannot grow in minimal medium. Mutant fails to persist in the squid.</text>
</comment>
<comment type="miscellaneous">
    <text evidence="3">Complements an E.coli nanT deletion mutant.</text>
</comment>
<comment type="similarity">
    <text evidence="5">Belongs to the sodium:solute symporter (SSF) (TC 2.A.21) family.</text>
</comment>
<evidence type="ECO:0000250" key="1">
    <source>
        <dbReference type="UniProtKB" id="B4EZY7"/>
    </source>
</evidence>
<evidence type="ECO:0000255" key="2"/>
<evidence type="ECO:0000269" key="3">
    <source>
    </source>
</evidence>
<evidence type="ECO:0000303" key="4">
    <source>
    </source>
</evidence>
<evidence type="ECO:0000305" key="5"/>
<evidence type="ECO:0000312" key="6">
    <source>
        <dbReference type="EMBL" id="AAW85163.1"/>
    </source>
</evidence>
<feature type="chain" id="PRO_0000440876" description="Sodium/sialic acid symporter NanT">
    <location>
        <begin position="1"/>
        <end position="505"/>
    </location>
</feature>
<feature type="transmembrane region" description="Helical" evidence="2">
    <location>
        <begin position="9"/>
        <end position="29"/>
    </location>
</feature>
<feature type="transmembrane region" description="Helical" evidence="2">
    <location>
        <begin position="45"/>
        <end position="65"/>
    </location>
</feature>
<feature type="transmembrane region" description="Helical" evidence="2">
    <location>
        <begin position="80"/>
        <end position="100"/>
    </location>
</feature>
<feature type="transmembrane region" description="Helical" evidence="2">
    <location>
        <begin position="128"/>
        <end position="148"/>
    </location>
</feature>
<feature type="transmembrane region" description="Helical" evidence="2">
    <location>
        <begin position="155"/>
        <end position="175"/>
    </location>
</feature>
<feature type="transmembrane region" description="Helical" evidence="2">
    <location>
        <begin position="183"/>
        <end position="203"/>
    </location>
</feature>
<feature type="transmembrane region" description="Helical" evidence="2">
    <location>
        <begin position="227"/>
        <end position="247"/>
    </location>
</feature>
<feature type="transmembrane region" description="Helical" evidence="2">
    <location>
        <begin position="280"/>
        <end position="300"/>
    </location>
</feature>
<feature type="transmembrane region" description="Helical" evidence="2">
    <location>
        <begin position="318"/>
        <end position="338"/>
    </location>
</feature>
<feature type="transmembrane region" description="Helical" evidence="2">
    <location>
        <begin position="378"/>
        <end position="398"/>
    </location>
</feature>
<feature type="transmembrane region" description="Helical" evidence="2">
    <location>
        <begin position="406"/>
        <end position="426"/>
    </location>
</feature>
<feature type="transmembrane region" description="Helical" evidence="2">
    <location>
        <begin position="435"/>
        <end position="455"/>
    </location>
</feature>
<feature type="transmembrane region" description="Helical" evidence="2">
    <location>
        <begin position="457"/>
        <end position="477"/>
    </location>
</feature>
<feature type="binding site" evidence="1">
    <location>
        <position position="56"/>
    </location>
    <ligand>
        <name>Na(+)</name>
        <dbReference type="ChEBI" id="CHEBI:29101"/>
        <label>1</label>
    </ligand>
</feature>
<feature type="binding site" evidence="1">
    <location>
        <position position="58"/>
    </location>
    <ligand>
        <name>N-acetyl-alpha-neuraminate</name>
        <dbReference type="ChEBI" id="CHEBI:58770"/>
    </ligand>
</feature>
<feature type="binding site" evidence="1">
    <location>
        <position position="59"/>
    </location>
    <ligand>
        <name>Na(+)</name>
        <dbReference type="ChEBI" id="CHEBI:29101"/>
        <label>1</label>
    </ligand>
</feature>
<feature type="binding site" evidence="1">
    <location>
        <position position="60"/>
    </location>
    <ligand>
        <name>N-acetyl-alpha-neuraminate</name>
        <dbReference type="ChEBI" id="CHEBI:58770"/>
    </ligand>
</feature>
<feature type="binding site" evidence="1">
    <location>
        <position position="63"/>
    </location>
    <ligand>
        <name>N-acetyl-alpha-neuraminate</name>
        <dbReference type="ChEBI" id="CHEBI:58770"/>
    </ligand>
</feature>
<feature type="binding site" evidence="1">
    <location>
        <position position="82"/>
    </location>
    <ligand>
        <name>N-acetyl-alpha-neuraminate</name>
        <dbReference type="ChEBI" id="CHEBI:58770"/>
    </ligand>
</feature>
<feature type="binding site" evidence="1">
    <location>
        <position position="135"/>
    </location>
    <ligand>
        <name>N-acetyl-alpha-neuraminate</name>
        <dbReference type="ChEBI" id="CHEBI:58770"/>
    </ligand>
</feature>
<feature type="binding site" evidence="1">
    <location>
        <position position="182"/>
    </location>
    <ligand>
        <name>Na(+)</name>
        <dbReference type="ChEBI" id="CHEBI:29101"/>
        <label>2</label>
    </ligand>
</feature>
<feature type="binding site" evidence="1">
    <location>
        <position position="339"/>
    </location>
    <ligand>
        <name>Na(+)</name>
        <dbReference type="ChEBI" id="CHEBI:29101"/>
        <label>1</label>
    </ligand>
</feature>
<feature type="binding site" evidence="1">
    <location>
        <position position="342"/>
    </location>
    <ligand>
        <name>Na(+)</name>
        <dbReference type="ChEBI" id="CHEBI:29101"/>
        <label>1</label>
    </ligand>
</feature>
<feature type="binding site" evidence="1">
    <location>
        <position position="342"/>
    </location>
    <ligand>
        <name>Na(+)</name>
        <dbReference type="ChEBI" id="CHEBI:29101"/>
        <label>2</label>
    </ligand>
</feature>
<feature type="binding site" evidence="1">
    <location>
        <position position="343"/>
    </location>
    <ligand>
        <name>Na(+)</name>
        <dbReference type="ChEBI" id="CHEBI:29101"/>
        <label>1</label>
    </ligand>
</feature>
<feature type="binding site" evidence="1">
    <location>
        <position position="345"/>
    </location>
    <ligand>
        <name>Na(+)</name>
        <dbReference type="ChEBI" id="CHEBI:29101"/>
        <label>2</label>
    </ligand>
</feature>
<feature type="binding site" evidence="1">
    <location>
        <position position="346"/>
    </location>
    <ligand>
        <name>Na(+)</name>
        <dbReference type="ChEBI" id="CHEBI:29101"/>
        <label>2</label>
    </ligand>
</feature>
<dbReference type="EMBL" id="CP000020">
    <property type="protein sequence ID" value="AAW85163.1"/>
    <property type="molecule type" value="Genomic_DNA"/>
</dbReference>
<dbReference type="RefSeq" id="WP_011261398.1">
    <property type="nucleotide sequence ID" value="NC_006840.2"/>
</dbReference>
<dbReference type="RefSeq" id="YP_204051.1">
    <property type="nucleotide sequence ID" value="NC_006840.2"/>
</dbReference>
<dbReference type="SMR" id="Q5E733"/>
<dbReference type="STRING" id="312309.VF_0668"/>
<dbReference type="TCDB" id="2.A.21.3.7">
    <property type="family name" value="the solute:sodium symporter (sss) family"/>
</dbReference>
<dbReference type="EnsemblBacteria" id="AAW85163">
    <property type="protein sequence ID" value="AAW85163"/>
    <property type="gene ID" value="VF_0668"/>
</dbReference>
<dbReference type="GeneID" id="54163323"/>
<dbReference type="KEGG" id="vfi:VF_0668"/>
<dbReference type="PATRIC" id="fig|312309.11.peg.661"/>
<dbReference type="eggNOG" id="COG0591">
    <property type="taxonomic scope" value="Bacteria"/>
</dbReference>
<dbReference type="HOGENOM" id="CLU_018808_11_4_6"/>
<dbReference type="OrthoDB" id="9814523at2"/>
<dbReference type="Proteomes" id="UP000000537">
    <property type="component" value="Chromosome I"/>
</dbReference>
<dbReference type="GO" id="GO:0005886">
    <property type="term" value="C:plasma membrane"/>
    <property type="evidence" value="ECO:0007669"/>
    <property type="project" value="UniProtKB-SubCell"/>
</dbReference>
<dbReference type="GO" id="GO:0046872">
    <property type="term" value="F:metal ion binding"/>
    <property type="evidence" value="ECO:0007669"/>
    <property type="project" value="UniProtKB-KW"/>
</dbReference>
<dbReference type="GO" id="GO:0015293">
    <property type="term" value="F:symporter activity"/>
    <property type="evidence" value="ECO:0007669"/>
    <property type="project" value="TreeGrafter"/>
</dbReference>
<dbReference type="GO" id="GO:0006814">
    <property type="term" value="P:sodium ion transport"/>
    <property type="evidence" value="ECO:0007669"/>
    <property type="project" value="UniProtKB-KW"/>
</dbReference>
<dbReference type="CDD" id="cd11495">
    <property type="entry name" value="SLC5sbd_NIS-like_u3"/>
    <property type="match status" value="1"/>
</dbReference>
<dbReference type="Gene3D" id="1.20.1730.10">
    <property type="entry name" value="Sodium/glucose cotransporter"/>
    <property type="match status" value="1"/>
</dbReference>
<dbReference type="InterPro" id="IPR038377">
    <property type="entry name" value="Na/Glc_symporter_sf"/>
</dbReference>
<dbReference type="InterPro" id="IPR001734">
    <property type="entry name" value="Na/solute_symporter"/>
</dbReference>
<dbReference type="InterPro" id="IPR051163">
    <property type="entry name" value="Sodium:Solute_Symporter_SSF"/>
</dbReference>
<dbReference type="NCBIfam" id="TIGR00813">
    <property type="entry name" value="sss"/>
    <property type="match status" value="1"/>
</dbReference>
<dbReference type="PANTHER" id="PTHR42985:SF40">
    <property type="entry name" value="LD47995P-RELATED"/>
    <property type="match status" value="1"/>
</dbReference>
<dbReference type="PANTHER" id="PTHR42985">
    <property type="entry name" value="SODIUM-COUPLED MONOCARBOXYLATE TRANSPORTER"/>
    <property type="match status" value="1"/>
</dbReference>
<dbReference type="Pfam" id="PF00474">
    <property type="entry name" value="SSF"/>
    <property type="match status" value="1"/>
</dbReference>
<dbReference type="PROSITE" id="PS50283">
    <property type="entry name" value="NA_SOLUT_SYMP_3"/>
    <property type="match status" value="1"/>
</dbReference>
<reference key="1">
    <citation type="journal article" date="2005" name="Proc. Natl. Acad. Sci. U.S.A.">
        <title>Complete genome sequence of Vibrio fischeri: a symbiotic bacterium with pathogenic congeners.</title>
        <authorList>
            <person name="Ruby E.G."/>
            <person name="Urbanowski M."/>
            <person name="Campbell J."/>
            <person name="Dunn A."/>
            <person name="Faini M."/>
            <person name="Gunsalus R."/>
            <person name="Lostroh P."/>
            <person name="Lupp C."/>
            <person name="McCann J."/>
            <person name="Millikan D."/>
            <person name="Schaefer A."/>
            <person name="Stabb E."/>
            <person name="Stevens A."/>
            <person name="Visick K."/>
            <person name="Whistler C."/>
            <person name="Greenberg E.P."/>
        </authorList>
    </citation>
    <scope>NUCLEOTIDE SEQUENCE [LARGE SCALE GENOMIC DNA]</scope>
    <source>
        <strain>ATCC 700601 / ES114</strain>
    </source>
</reference>
<reference key="2">
    <citation type="journal article" date="2017" name="J. Biol. Chem.">
        <title>Model-enabled gene search (MEGS) allows fast and direct discovery of enzymatic and transport gene functions in the marine bacterium Vibrio fischeri.</title>
        <authorList>
            <person name="Pan S."/>
            <person name="Nikolakakis K."/>
            <person name="Adamczyk P.A."/>
            <person name="Pan M."/>
            <person name="Ruby E.G."/>
            <person name="Reed J.L."/>
        </authorList>
    </citation>
    <scope>FUNCTION</scope>
    <scope>DISRUPTION PHENOTYPE</scope>
    <source>
        <strain>ATCC 700601 / ES114</strain>
    </source>
</reference>
<organism>
    <name type="scientific">Aliivibrio fischeri (strain ATCC 700601 / ES114)</name>
    <name type="common">Vibrio fischeri</name>
    <dbReference type="NCBI Taxonomy" id="312309"/>
    <lineage>
        <taxon>Bacteria</taxon>
        <taxon>Pseudomonadati</taxon>
        <taxon>Pseudomonadota</taxon>
        <taxon>Gammaproteobacteria</taxon>
        <taxon>Vibrionales</taxon>
        <taxon>Vibrionaceae</taxon>
        <taxon>Aliivibrio</taxon>
    </lineage>
</organism>
<name>NANT_ALIF1</name>
<accession>Q5E733</accession>
<proteinExistence type="inferred from homology"/>